<feature type="chain" id="PRO_0000080620" description="Ubiquitin carboxyl-terminal hydrolase 3">
    <location>
        <begin position="1"/>
        <end position="520"/>
    </location>
</feature>
<feature type="domain" description="USP">
    <location>
        <begin position="159"/>
        <end position="511"/>
    </location>
</feature>
<feature type="zinc finger region" description="UBP-type" evidence="3">
    <location>
        <begin position="1"/>
        <end position="121"/>
    </location>
</feature>
<feature type="active site" description="Nucleophile" evidence="4 5">
    <location>
        <position position="168"/>
    </location>
</feature>
<feature type="active site" description="Proton acceptor" evidence="4 5">
    <location>
        <position position="471"/>
    </location>
</feature>
<feature type="binding site" evidence="3">
    <location>
        <position position="3"/>
    </location>
    <ligand>
        <name>Zn(2+)</name>
        <dbReference type="ChEBI" id="CHEBI:29105"/>
        <label>1</label>
    </ligand>
</feature>
<feature type="binding site" evidence="3">
    <location>
        <position position="5"/>
    </location>
    <ligand>
        <name>Zn(2+)</name>
        <dbReference type="ChEBI" id="CHEBI:29105"/>
        <label>1</label>
    </ligand>
</feature>
<feature type="binding site" evidence="3">
    <location>
        <position position="29"/>
    </location>
    <ligand>
        <name>Zn(2+)</name>
        <dbReference type="ChEBI" id="CHEBI:29105"/>
        <label>2</label>
    </ligand>
</feature>
<feature type="binding site" evidence="3">
    <location>
        <position position="32"/>
    </location>
    <ligand>
        <name>Zn(2+)</name>
        <dbReference type="ChEBI" id="CHEBI:29105"/>
        <label>2</label>
    </ligand>
</feature>
<feature type="binding site" evidence="3">
    <location>
        <position position="41"/>
    </location>
    <ligand>
        <name>Zn(2+)</name>
        <dbReference type="ChEBI" id="CHEBI:29105"/>
        <label>3</label>
    </ligand>
</feature>
<feature type="binding site" evidence="3">
    <location>
        <position position="44"/>
    </location>
    <ligand>
        <name>Zn(2+)</name>
        <dbReference type="ChEBI" id="CHEBI:29105"/>
        <label>3</label>
    </ligand>
</feature>
<feature type="binding site" evidence="3">
    <location>
        <position position="49"/>
    </location>
    <ligand>
        <name>Zn(2+)</name>
        <dbReference type="ChEBI" id="CHEBI:29105"/>
        <label>2</label>
    </ligand>
</feature>
<feature type="binding site" evidence="3">
    <location>
        <position position="56"/>
    </location>
    <ligand>
        <name>Zn(2+)</name>
        <dbReference type="ChEBI" id="CHEBI:29105"/>
        <label>2</label>
    </ligand>
</feature>
<feature type="binding site" evidence="3">
    <location>
        <position position="60"/>
    </location>
    <ligand>
        <name>Zn(2+)</name>
        <dbReference type="ChEBI" id="CHEBI:29105"/>
        <label>3</label>
    </ligand>
</feature>
<feature type="binding site" evidence="3">
    <location>
        <position position="82"/>
    </location>
    <ligand>
        <name>Zn(2+)</name>
        <dbReference type="ChEBI" id="CHEBI:29105"/>
        <label>3</label>
    </ligand>
</feature>
<feature type="binding site" evidence="3">
    <location>
        <position position="95"/>
    </location>
    <ligand>
        <name>Zn(2+)</name>
        <dbReference type="ChEBI" id="CHEBI:29105"/>
        <label>1</label>
    </ligand>
</feature>
<feature type="binding site" evidence="3">
    <location>
        <position position="98"/>
    </location>
    <ligand>
        <name>Zn(2+)</name>
        <dbReference type="ChEBI" id="CHEBI:29105"/>
        <label>1</label>
    </ligand>
</feature>
<feature type="modified residue" description="N-acetylmethionine" evidence="2">
    <location>
        <position position="1"/>
    </location>
</feature>
<name>UBP3_MOUSE</name>
<sequence>MECPHLSSSVCIAPDSAKFPNGSPSSWCCSVCRSNKSPWVCLTCSSVHCGRYVNGHAKKHYEDAQIPLLNHKRSEKQEKAQHTVCMDCSSYSTYCYRCDDFVVNDTKLGLVQKVREHLQNLENSAFTADRHRKRKLLENSSLNSKLLKVNGSTTAICATGLRNLGNTCFMNAILQSLSNIEQFCCYFKELPAVELRNGKTAGRRTYHTRSQGDSNVSLVEEFRKTLCALWQGSQTAFSPESLFYVVWKIMPNFRGYQQQDAHEFMRYLLDHLHLELQGGFNGVSRSAILQENSTLSASNKCCINGASTVVTAIFGGILQNEVNCLICGTESRKFDPFLDLSLDIPSQFRSKRSKNQENGPVCSLRDCLRSFTDLEELDETELYMCHKCKKKQKSTKKFWIQKLPKALCLHLKRFHWTAYLRNKVDTYVQFPLRGLDMKCYLLEPENSGPDSCLYDLAAVVVHHGSGVGSGHYTAYAVHEGRWFHFNDSTVTVTDEETVGKAKAYILFYVERQARAGAEKL</sequence>
<accession>Q91W36</accession>
<organism>
    <name type="scientific">Mus musculus</name>
    <name type="common">Mouse</name>
    <dbReference type="NCBI Taxonomy" id="10090"/>
    <lineage>
        <taxon>Eukaryota</taxon>
        <taxon>Metazoa</taxon>
        <taxon>Chordata</taxon>
        <taxon>Craniata</taxon>
        <taxon>Vertebrata</taxon>
        <taxon>Euteleostomi</taxon>
        <taxon>Mammalia</taxon>
        <taxon>Eutheria</taxon>
        <taxon>Euarchontoglires</taxon>
        <taxon>Glires</taxon>
        <taxon>Rodentia</taxon>
        <taxon>Myomorpha</taxon>
        <taxon>Muroidea</taxon>
        <taxon>Muridae</taxon>
        <taxon>Murinae</taxon>
        <taxon>Mus</taxon>
        <taxon>Mus</taxon>
    </lineage>
</organism>
<protein>
    <recommendedName>
        <fullName>Ubiquitin carboxyl-terminal hydrolase 3</fullName>
        <ecNumber>3.4.19.12</ecNumber>
    </recommendedName>
    <alternativeName>
        <fullName>Deubiquitinating enzyme 3</fullName>
    </alternativeName>
    <alternativeName>
        <fullName>Ubiquitin thioesterase 3</fullName>
    </alternativeName>
    <alternativeName>
        <fullName>Ubiquitin-specific-processing protease 3</fullName>
    </alternativeName>
</protein>
<comment type="function">
    <text evidence="2 6">Deubiquitinase that plays a role in several cellular processes including transcriptional regulation, cell cycle progression or innate immunity. In response to DNA damage, deubiquitinates monoubiquitinated target proteins such as histone H2A and H2AX and thereby counteracts RNF168- and RNF8-mediated ubiquitination. In turn, participates in the recruitment of DNA damage repair factors to DNA break sites (PubMed:25113974). Required for proper progression through S phase and subsequent mitotic entry. Acts as a positive regulator of TP53 by deubiquitinating and stabilizing it to promote normal cell proliferation and transformation. Participates in establishing tolerance innate immune memory through non-transcriptional feedback. Mechanistically, negatively regulates TLR-induced NF-kappa-B signaling by targeting and removing the 'Lys-63'-linked polyubiquitin chains on MYD88. Negatively regulates the activation of type I interferon signaling by mediating 'Lys-63'-linked polyubiquitin chains on RIGI and IFIH1. Also deubiquinates ASC/PYCARD, the central adapter mediating the assembly and activation of most inflammasomes, and thereby promotes inflammasome activation.</text>
</comment>
<comment type="catalytic activity">
    <reaction evidence="2">
        <text>Thiol-dependent hydrolysis of ester, thioester, amide, peptide and isopeptide bonds formed by the C-terminal Gly of ubiquitin (a 76-residue protein attached to proteins as an intracellular targeting signal).</text>
        <dbReference type="EC" id="3.4.19.12"/>
    </reaction>
</comment>
<comment type="subunit">
    <text evidence="1">Interacts (via UBP-type domain) with H2A; the interaction is less efficient than with monoubiquitinated H2A.</text>
</comment>
<comment type="subcellular location">
    <subcellularLocation>
        <location evidence="2">Nucleus</location>
    </subcellularLocation>
    <subcellularLocation>
        <location evidence="2">Cytoplasm</location>
    </subcellularLocation>
    <text evidence="2">Localizes preferentially with monoubiquitinated H2A to chromatin. Upon NF-kappa-B signaling activation, exits the nucleus.</text>
</comment>
<comment type="domain">
    <text>Both protease activity and an intact zinc finger are required for H2A monodeubiquitination.</text>
</comment>
<comment type="disruption phenotype">
    <text evidence="6">Usp3-deficient mice show normal postnatal development and genome-wide increase in mono-ubiquitinated H2A and H2B. However, loss of USP3 leads to shorter life span and increased cancer incidence. They develop an develop lymphopenia with age with increased spontaneous DNA damage.</text>
</comment>
<comment type="similarity">
    <text evidence="7">Belongs to the peptidase C19 family. USP3 subfamily.</text>
</comment>
<dbReference type="EC" id="3.4.19.12"/>
<dbReference type="EMBL" id="AK031141">
    <property type="protein sequence ID" value="BAC27276.1"/>
    <property type="molecule type" value="mRNA"/>
</dbReference>
<dbReference type="EMBL" id="BC017156">
    <property type="protein sequence ID" value="AAH17156.1"/>
    <property type="molecule type" value="mRNA"/>
</dbReference>
<dbReference type="CCDS" id="CCDS23305.1"/>
<dbReference type="RefSeq" id="NP_659186.1">
    <property type="nucleotide sequence ID" value="NM_144937.4"/>
</dbReference>
<dbReference type="SMR" id="Q91W36"/>
<dbReference type="BioGRID" id="231662">
    <property type="interactions" value="1"/>
</dbReference>
<dbReference type="FunCoup" id="Q91W36">
    <property type="interactions" value="3746"/>
</dbReference>
<dbReference type="STRING" id="10090.ENSMUSP00000122199"/>
<dbReference type="MEROPS" id="C19.026"/>
<dbReference type="iPTMnet" id="Q91W36"/>
<dbReference type="PhosphoSitePlus" id="Q91W36"/>
<dbReference type="SwissPalm" id="Q91W36"/>
<dbReference type="PaxDb" id="10090-ENSMUSP00000122199"/>
<dbReference type="PeptideAtlas" id="Q91W36"/>
<dbReference type="ProteomicsDB" id="298462"/>
<dbReference type="Pumba" id="Q91W36"/>
<dbReference type="Antibodypedia" id="13304">
    <property type="antibodies" value="307 antibodies from 33 providers"/>
</dbReference>
<dbReference type="DNASU" id="235441"/>
<dbReference type="Ensembl" id="ENSMUST00000127569.8">
    <property type="protein sequence ID" value="ENSMUSP00000122199.2"/>
    <property type="gene ID" value="ENSMUSG00000032376.13"/>
</dbReference>
<dbReference type="GeneID" id="235441"/>
<dbReference type="KEGG" id="mmu:235441"/>
<dbReference type="UCSC" id="uc009qey.2">
    <property type="organism name" value="mouse"/>
</dbReference>
<dbReference type="AGR" id="MGI:2152450"/>
<dbReference type="CTD" id="9960"/>
<dbReference type="MGI" id="MGI:2152450">
    <property type="gene designation" value="Usp3"/>
</dbReference>
<dbReference type="VEuPathDB" id="HostDB:ENSMUSG00000032376"/>
<dbReference type="eggNOG" id="KOG1867">
    <property type="taxonomic scope" value="Eukaryota"/>
</dbReference>
<dbReference type="GeneTree" id="ENSGT00940000157850"/>
<dbReference type="InParanoid" id="Q91W36"/>
<dbReference type="OMA" id="KYWVKYL"/>
<dbReference type="OrthoDB" id="21192at2759"/>
<dbReference type="PhylomeDB" id="Q91W36"/>
<dbReference type="TreeFam" id="TF315281"/>
<dbReference type="Reactome" id="R-MMU-5689880">
    <property type="pathway name" value="Ub-specific processing proteases"/>
</dbReference>
<dbReference type="BioGRID-ORCS" id="235441">
    <property type="hits" value="3 hits in 117 CRISPR screens"/>
</dbReference>
<dbReference type="ChiTaRS" id="Usp3">
    <property type="organism name" value="mouse"/>
</dbReference>
<dbReference type="PRO" id="PR:Q91W36"/>
<dbReference type="Proteomes" id="UP000000589">
    <property type="component" value="Chromosome 9"/>
</dbReference>
<dbReference type="RNAct" id="Q91W36">
    <property type="molecule type" value="protein"/>
</dbReference>
<dbReference type="Bgee" id="ENSMUSG00000032376">
    <property type="expression patterns" value="Expressed in undifferentiated genital tubercle and 253 other cell types or tissues"/>
</dbReference>
<dbReference type="ExpressionAtlas" id="Q91W36">
    <property type="expression patterns" value="baseline and differential"/>
</dbReference>
<dbReference type="GO" id="GO:0000785">
    <property type="term" value="C:chromatin"/>
    <property type="evidence" value="ECO:0007669"/>
    <property type="project" value="Ensembl"/>
</dbReference>
<dbReference type="GO" id="GO:0036464">
    <property type="term" value="C:cytoplasmic ribonucleoprotein granule"/>
    <property type="evidence" value="ECO:0007669"/>
    <property type="project" value="Ensembl"/>
</dbReference>
<dbReference type="GO" id="GO:0090543">
    <property type="term" value="C:Flemming body"/>
    <property type="evidence" value="ECO:0007669"/>
    <property type="project" value="Ensembl"/>
</dbReference>
<dbReference type="GO" id="GO:0005654">
    <property type="term" value="C:nucleoplasm"/>
    <property type="evidence" value="ECO:0007669"/>
    <property type="project" value="Ensembl"/>
</dbReference>
<dbReference type="GO" id="GO:0004843">
    <property type="term" value="F:cysteine-type deubiquitinase activity"/>
    <property type="evidence" value="ECO:0007669"/>
    <property type="project" value="UniProtKB-EC"/>
</dbReference>
<dbReference type="GO" id="GO:0042393">
    <property type="term" value="F:histone binding"/>
    <property type="evidence" value="ECO:0007669"/>
    <property type="project" value="Ensembl"/>
</dbReference>
<dbReference type="GO" id="GO:0140950">
    <property type="term" value="F:histone H2A deubiquitinase activity"/>
    <property type="evidence" value="ECO:0007669"/>
    <property type="project" value="Ensembl"/>
</dbReference>
<dbReference type="GO" id="GO:0140936">
    <property type="term" value="F:histone H2B deubiquitinase activity"/>
    <property type="evidence" value="ECO:0007669"/>
    <property type="project" value="Ensembl"/>
</dbReference>
<dbReference type="GO" id="GO:0008270">
    <property type="term" value="F:zinc ion binding"/>
    <property type="evidence" value="ECO:0007669"/>
    <property type="project" value="UniProtKB-KW"/>
</dbReference>
<dbReference type="GO" id="GO:0006281">
    <property type="term" value="P:DNA repair"/>
    <property type="evidence" value="ECO:0007669"/>
    <property type="project" value="Ensembl"/>
</dbReference>
<dbReference type="GO" id="GO:0140861">
    <property type="term" value="P:DNA repair-dependent chromatin remodeling"/>
    <property type="evidence" value="ECO:0007669"/>
    <property type="project" value="Ensembl"/>
</dbReference>
<dbReference type="GO" id="GO:0016579">
    <property type="term" value="P:protein deubiquitination"/>
    <property type="evidence" value="ECO:0007669"/>
    <property type="project" value="InterPro"/>
</dbReference>
<dbReference type="GO" id="GO:0006508">
    <property type="term" value="P:proteolysis"/>
    <property type="evidence" value="ECO:0007669"/>
    <property type="project" value="UniProtKB-KW"/>
</dbReference>
<dbReference type="FunFam" id="3.30.40.10:FF:000234">
    <property type="entry name" value="Ubiquitinyl hydrolase 1"/>
    <property type="match status" value="1"/>
</dbReference>
<dbReference type="FunFam" id="3.90.70.10:FF:000019">
    <property type="entry name" value="Ubiquitinyl hydrolase 1"/>
    <property type="match status" value="1"/>
</dbReference>
<dbReference type="Gene3D" id="3.90.70.10">
    <property type="entry name" value="Cysteine proteinases"/>
    <property type="match status" value="1"/>
</dbReference>
<dbReference type="Gene3D" id="3.30.40.10">
    <property type="entry name" value="Zinc/RING finger domain, C3HC4 (zinc finger)"/>
    <property type="match status" value="1"/>
</dbReference>
<dbReference type="InterPro" id="IPR038765">
    <property type="entry name" value="Papain-like_cys_pep_sf"/>
</dbReference>
<dbReference type="InterPro" id="IPR001394">
    <property type="entry name" value="Peptidase_C19_UCH"/>
</dbReference>
<dbReference type="InterPro" id="IPR050185">
    <property type="entry name" value="Ub_carboxyl-term_hydrolase"/>
</dbReference>
<dbReference type="InterPro" id="IPR018200">
    <property type="entry name" value="USP_CS"/>
</dbReference>
<dbReference type="InterPro" id="IPR028889">
    <property type="entry name" value="USP_dom"/>
</dbReference>
<dbReference type="InterPro" id="IPR013083">
    <property type="entry name" value="Znf_RING/FYVE/PHD"/>
</dbReference>
<dbReference type="InterPro" id="IPR001607">
    <property type="entry name" value="Znf_UBP"/>
</dbReference>
<dbReference type="PANTHER" id="PTHR21646">
    <property type="entry name" value="UBIQUITIN CARBOXYL-TERMINAL HYDROLASE"/>
    <property type="match status" value="1"/>
</dbReference>
<dbReference type="PANTHER" id="PTHR21646:SF19">
    <property type="entry name" value="UBIQUITIN CARBOXYL-TERMINAL HYDROLASE 3"/>
    <property type="match status" value="1"/>
</dbReference>
<dbReference type="Pfam" id="PF00443">
    <property type="entry name" value="UCH"/>
    <property type="match status" value="1"/>
</dbReference>
<dbReference type="Pfam" id="PF02148">
    <property type="entry name" value="zf-UBP"/>
    <property type="match status" value="1"/>
</dbReference>
<dbReference type="SMART" id="SM00290">
    <property type="entry name" value="ZnF_UBP"/>
    <property type="match status" value="1"/>
</dbReference>
<dbReference type="SUPFAM" id="SSF54001">
    <property type="entry name" value="Cysteine proteinases"/>
    <property type="match status" value="1"/>
</dbReference>
<dbReference type="SUPFAM" id="SSF57850">
    <property type="entry name" value="RING/U-box"/>
    <property type="match status" value="1"/>
</dbReference>
<dbReference type="PROSITE" id="PS00972">
    <property type="entry name" value="USP_1"/>
    <property type="match status" value="1"/>
</dbReference>
<dbReference type="PROSITE" id="PS00973">
    <property type="entry name" value="USP_2"/>
    <property type="match status" value="1"/>
</dbReference>
<dbReference type="PROSITE" id="PS50235">
    <property type="entry name" value="USP_3"/>
    <property type="match status" value="1"/>
</dbReference>
<dbReference type="PROSITE" id="PS50271">
    <property type="entry name" value="ZF_UBP"/>
    <property type="match status" value="1"/>
</dbReference>
<reference key="1">
    <citation type="journal article" date="2005" name="Science">
        <title>The transcriptional landscape of the mammalian genome.</title>
        <authorList>
            <person name="Carninci P."/>
            <person name="Kasukawa T."/>
            <person name="Katayama S."/>
            <person name="Gough J."/>
            <person name="Frith M.C."/>
            <person name="Maeda N."/>
            <person name="Oyama R."/>
            <person name="Ravasi T."/>
            <person name="Lenhard B."/>
            <person name="Wells C."/>
            <person name="Kodzius R."/>
            <person name="Shimokawa K."/>
            <person name="Bajic V.B."/>
            <person name="Brenner S.E."/>
            <person name="Batalov S."/>
            <person name="Forrest A.R."/>
            <person name="Zavolan M."/>
            <person name="Davis M.J."/>
            <person name="Wilming L.G."/>
            <person name="Aidinis V."/>
            <person name="Allen J.E."/>
            <person name="Ambesi-Impiombato A."/>
            <person name="Apweiler R."/>
            <person name="Aturaliya R.N."/>
            <person name="Bailey T.L."/>
            <person name="Bansal M."/>
            <person name="Baxter L."/>
            <person name="Beisel K.W."/>
            <person name="Bersano T."/>
            <person name="Bono H."/>
            <person name="Chalk A.M."/>
            <person name="Chiu K.P."/>
            <person name="Choudhary V."/>
            <person name="Christoffels A."/>
            <person name="Clutterbuck D.R."/>
            <person name="Crowe M.L."/>
            <person name="Dalla E."/>
            <person name="Dalrymple B.P."/>
            <person name="de Bono B."/>
            <person name="Della Gatta G."/>
            <person name="di Bernardo D."/>
            <person name="Down T."/>
            <person name="Engstrom P."/>
            <person name="Fagiolini M."/>
            <person name="Faulkner G."/>
            <person name="Fletcher C.F."/>
            <person name="Fukushima T."/>
            <person name="Furuno M."/>
            <person name="Futaki S."/>
            <person name="Gariboldi M."/>
            <person name="Georgii-Hemming P."/>
            <person name="Gingeras T.R."/>
            <person name="Gojobori T."/>
            <person name="Green R.E."/>
            <person name="Gustincich S."/>
            <person name="Harbers M."/>
            <person name="Hayashi Y."/>
            <person name="Hensch T.K."/>
            <person name="Hirokawa N."/>
            <person name="Hill D."/>
            <person name="Huminiecki L."/>
            <person name="Iacono M."/>
            <person name="Ikeo K."/>
            <person name="Iwama A."/>
            <person name="Ishikawa T."/>
            <person name="Jakt M."/>
            <person name="Kanapin A."/>
            <person name="Katoh M."/>
            <person name="Kawasawa Y."/>
            <person name="Kelso J."/>
            <person name="Kitamura H."/>
            <person name="Kitano H."/>
            <person name="Kollias G."/>
            <person name="Krishnan S.P."/>
            <person name="Kruger A."/>
            <person name="Kummerfeld S.K."/>
            <person name="Kurochkin I.V."/>
            <person name="Lareau L.F."/>
            <person name="Lazarevic D."/>
            <person name="Lipovich L."/>
            <person name="Liu J."/>
            <person name="Liuni S."/>
            <person name="McWilliam S."/>
            <person name="Madan Babu M."/>
            <person name="Madera M."/>
            <person name="Marchionni L."/>
            <person name="Matsuda H."/>
            <person name="Matsuzawa S."/>
            <person name="Miki H."/>
            <person name="Mignone F."/>
            <person name="Miyake S."/>
            <person name="Morris K."/>
            <person name="Mottagui-Tabar S."/>
            <person name="Mulder N."/>
            <person name="Nakano N."/>
            <person name="Nakauchi H."/>
            <person name="Ng P."/>
            <person name="Nilsson R."/>
            <person name="Nishiguchi S."/>
            <person name="Nishikawa S."/>
            <person name="Nori F."/>
            <person name="Ohara O."/>
            <person name="Okazaki Y."/>
            <person name="Orlando V."/>
            <person name="Pang K.C."/>
            <person name="Pavan W.J."/>
            <person name="Pavesi G."/>
            <person name="Pesole G."/>
            <person name="Petrovsky N."/>
            <person name="Piazza S."/>
            <person name="Reed J."/>
            <person name="Reid J.F."/>
            <person name="Ring B.Z."/>
            <person name="Ringwald M."/>
            <person name="Rost B."/>
            <person name="Ruan Y."/>
            <person name="Salzberg S.L."/>
            <person name="Sandelin A."/>
            <person name="Schneider C."/>
            <person name="Schoenbach C."/>
            <person name="Sekiguchi K."/>
            <person name="Semple C.A."/>
            <person name="Seno S."/>
            <person name="Sessa L."/>
            <person name="Sheng Y."/>
            <person name="Shibata Y."/>
            <person name="Shimada H."/>
            <person name="Shimada K."/>
            <person name="Silva D."/>
            <person name="Sinclair B."/>
            <person name="Sperling S."/>
            <person name="Stupka E."/>
            <person name="Sugiura K."/>
            <person name="Sultana R."/>
            <person name="Takenaka Y."/>
            <person name="Taki K."/>
            <person name="Tammoja K."/>
            <person name="Tan S.L."/>
            <person name="Tang S."/>
            <person name="Taylor M.S."/>
            <person name="Tegner J."/>
            <person name="Teichmann S.A."/>
            <person name="Ueda H.R."/>
            <person name="van Nimwegen E."/>
            <person name="Verardo R."/>
            <person name="Wei C.L."/>
            <person name="Yagi K."/>
            <person name="Yamanishi H."/>
            <person name="Zabarovsky E."/>
            <person name="Zhu S."/>
            <person name="Zimmer A."/>
            <person name="Hide W."/>
            <person name="Bult C."/>
            <person name="Grimmond S.M."/>
            <person name="Teasdale R.D."/>
            <person name="Liu E.T."/>
            <person name="Brusic V."/>
            <person name="Quackenbush J."/>
            <person name="Wahlestedt C."/>
            <person name="Mattick J.S."/>
            <person name="Hume D.A."/>
            <person name="Kai C."/>
            <person name="Sasaki D."/>
            <person name="Tomaru Y."/>
            <person name="Fukuda S."/>
            <person name="Kanamori-Katayama M."/>
            <person name="Suzuki M."/>
            <person name="Aoki J."/>
            <person name="Arakawa T."/>
            <person name="Iida J."/>
            <person name="Imamura K."/>
            <person name="Itoh M."/>
            <person name="Kato T."/>
            <person name="Kawaji H."/>
            <person name="Kawagashira N."/>
            <person name="Kawashima T."/>
            <person name="Kojima M."/>
            <person name="Kondo S."/>
            <person name="Konno H."/>
            <person name="Nakano K."/>
            <person name="Ninomiya N."/>
            <person name="Nishio T."/>
            <person name="Okada M."/>
            <person name="Plessy C."/>
            <person name="Shibata K."/>
            <person name="Shiraki T."/>
            <person name="Suzuki S."/>
            <person name="Tagami M."/>
            <person name="Waki K."/>
            <person name="Watahiki A."/>
            <person name="Okamura-Oho Y."/>
            <person name="Suzuki H."/>
            <person name="Kawai J."/>
            <person name="Hayashizaki Y."/>
        </authorList>
    </citation>
    <scope>NUCLEOTIDE SEQUENCE [LARGE SCALE MRNA]</scope>
    <source>
        <strain>C57BL/6J</strain>
        <tissue>Forelimb</tissue>
    </source>
</reference>
<reference key="2">
    <citation type="journal article" date="2004" name="Genome Res.">
        <title>The status, quality, and expansion of the NIH full-length cDNA project: the Mammalian Gene Collection (MGC).</title>
        <authorList>
            <consortium name="The MGC Project Team"/>
        </authorList>
    </citation>
    <scope>NUCLEOTIDE SEQUENCE [LARGE SCALE MRNA]</scope>
    <source>
        <tissue>Salivary gland</tissue>
    </source>
</reference>
<reference key="3">
    <citation type="journal article" date="2014" name="J. Exp. Med.">
        <title>Tight regulation of ubiquitin-mediated DNA damage response by USP3 preserves the functional integrity of hematopoietic stem cells.</title>
        <authorList>
            <person name="Lancini C."/>
            <person name="van den Berk P.C."/>
            <person name="Vissers J.H."/>
            <person name="Gargiulo G."/>
            <person name="Song J.Y."/>
            <person name="Hulsman D."/>
            <person name="Serresi M."/>
            <person name="Tanger E."/>
            <person name="Blom M."/>
            <person name="Vens C."/>
            <person name="van Lohuizen M."/>
            <person name="Jacobs H."/>
            <person name="Citterio E."/>
        </authorList>
    </citation>
    <scope>FUNCTION</scope>
    <scope>DISRUPTION PHENOTYPE</scope>
</reference>
<keyword id="KW-0007">Acetylation</keyword>
<keyword id="KW-0131">Cell cycle</keyword>
<keyword id="KW-0156">Chromatin regulator</keyword>
<keyword id="KW-0963">Cytoplasm</keyword>
<keyword id="KW-0227">DNA damage</keyword>
<keyword id="KW-0378">Hydrolase</keyword>
<keyword id="KW-0479">Metal-binding</keyword>
<keyword id="KW-0539">Nucleus</keyword>
<keyword id="KW-0645">Protease</keyword>
<keyword id="KW-1185">Reference proteome</keyword>
<keyword id="KW-0788">Thiol protease</keyword>
<keyword id="KW-0833">Ubl conjugation pathway</keyword>
<keyword id="KW-0862">Zinc</keyword>
<keyword id="KW-0863">Zinc-finger</keyword>
<evidence type="ECO:0000250" key="1"/>
<evidence type="ECO:0000250" key="2">
    <source>
        <dbReference type="UniProtKB" id="Q9Y6I4"/>
    </source>
</evidence>
<evidence type="ECO:0000255" key="3">
    <source>
        <dbReference type="PROSITE-ProRule" id="PRU00502"/>
    </source>
</evidence>
<evidence type="ECO:0000255" key="4">
    <source>
        <dbReference type="PROSITE-ProRule" id="PRU10092"/>
    </source>
</evidence>
<evidence type="ECO:0000255" key="5">
    <source>
        <dbReference type="PROSITE-ProRule" id="PRU10093"/>
    </source>
</evidence>
<evidence type="ECO:0000269" key="6">
    <source>
    </source>
</evidence>
<evidence type="ECO:0000305" key="7"/>
<gene>
    <name type="primary">Usp3</name>
</gene>
<proteinExistence type="evidence at transcript level"/>